<organism>
    <name type="scientific">Arabidopsis thaliana</name>
    <name type="common">Mouse-ear cress</name>
    <dbReference type="NCBI Taxonomy" id="3702"/>
    <lineage>
        <taxon>Eukaryota</taxon>
        <taxon>Viridiplantae</taxon>
        <taxon>Streptophyta</taxon>
        <taxon>Embryophyta</taxon>
        <taxon>Tracheophyta</taxon>
        <taxon>Spermatophyta</taxon>
        <taxon>Magnoliopsida</taxon>
        <taxon>eudicotyledons</taxon>
        <taxon>Gunneridae</taxon>
        <taxon>Pentapetalae</taxon>
        <taxon>rosids</taxon>
        <taxon>malvids</taxon>
        <taxon>Brassicales</taxon>
        <taxon>Brassicaceae</taxon>
        <taxon>Camelineae</taxon>
        <taxon>Arabidopsis</taxon>
    </lineage>
</organism>
<name>NAC56_ARATH</name>
<feature type="chain" id="PRO_0000433305" description="NAC transcription factor 56">
    <location>
        <begin position="1"/>
        <end position="364"/>
    </location>
</feature>
<feature type="domain" description="NAC" evidence="1">
    <location>
        <begin position="17"/>
        <end position="178"/>
    </location>
</feature>
<feature type="DNA-binding region" evidence="1">
    <location>
        <begin position="116"/>
        <end position="184"/>
    </location>
</feature>
<feature type="region of interest" description="Disordered" evidence="2">
    <location>
        <begin position="1"/>
        <end position="23"/>
    </location>
</feature>
<feature type="compositionally biased region" description="Pro residues" evidence="2">
    <location>
        <begin position="9"/>
        <end position="18"/>
    </location>
</feature>
<dbReference type="EMBL" id="AB049071">
    <property type="protein sequence ID" value="BAB20600.1"/>
    <property type="molecule type" value="mRNA"/>
</dbReference>
<dbReference type="EMBL" id="AB022218">
    <property type="protein sequence ID" value="BAB02380.1"/>
    <property type="molecule type" value="Genomic_DNA"/>
</dbReference>
<dbReference type="EMBL" id="AC024081">
    <property type="protein sequence ID" value="AAF35417.1"/>
    <property type="molecule type" value="Genomic_DNA"/>
</dbReference>
<dbReference type="EMBL" id="CP002686">
    <property type="protein sequence ID" value="AEE75684.1"/>
    <property type="molecule type" value="Genomic_DNA"/>
</dbReference>
<dbReference type="EMBL" id="BT004079">
    <property type="protein sequence ID" value="AAO42106.1"/>
    <property type="molecule type" value="mRNA"/>
</dbReference>
<dbReference type="EMBL" id="BT005044">
    <property type="protein sequence ID" value="AAO50577.1"/>
    <property type="molecule type" value="mRNA"/>
</dbReference>
<dbReference type="RefSeq" id="NP_188170.1">
    <property type="nucleotide sequence ID" value="NM_112419.4"/>
</dbReference>
<dbReference type="SMR" id="Q9LD44"/>
<dbReference type="FunCoup" id="Q9LD44">
    <property type="interactions" value="69"/>
</dbReference>
<dbReference type="STRING" id="3702.Q9LD44"/>
<dbReference type="PaxDb" id="3702-AT3G15510.1"/>
<dbReference type="ProteomicsDB" id="251265"/>
<dbReference type="EnsemblPlants" id="AT3G15510.1">
    <property type="protein sequence ID" value="AT3G15510.1"/>
    <property type="gene ID" value="AT3G15510"/>
</dbReference>
<dbReference type="GeneID" id="820790"/>
<dbReference type="Gramene" id="AT3G15510.1">
    <property type="protein sequence ID" value="AT3G15510.1"/>
    <property type="gene ID" value="AT3G15510"/>
</dbReference>
<dbReference type="KEGG" id="ath:AT3G15510"/>
<dbReference type="Araport" id="AT3G15510"/>
<dbReference type="TAIR" id="AT3G15510">
    <property type="gene designation" value="NAC2"/>
</dbReference>
<dbReference type="eggNOG" id="ENOG502QRBC">
    <property type="taxonomic scope" value="Eukaryota"/>
</dbReference>
<dbReference type="HOGENOM" id="CLU_035664_8_1_1"/>
<dbReference type="InParanoid" id="Q9LD44"/>
<dbReference type="OMA" id="NIAVCTN"/>
<dbReference type="OrthoDB" id="1921961at2759"/>
<dbReference type="PhylomeDB" id="Q9LD44"/>
<dbReference type="PRO" id="PR:Q9LD44"/>
<dbReference type="Proteomes" id="UP000006548">
    <property type="component" value="Chromosome 3"/>
</dbReference>
<dbReference type="ExpressionAtlas" id="Q9LD44">
    <property type="expression patterns" value="baseline and differential"/>
</dbReference>
<dbReference type="GO" id="GO:0005634">
    <property type="term" value="C:nucleus"/>
    <property type="evidence" value="ECO:0000314"/>
    <property type="project" value="UniProtKB"/>
</dbReference>
<dbReference type="GO" id="GO:0003700">
    <property type="term" value="F:DNA-binding transcription factor activity"/>
    <property type="evidence" value="ECO:0000250"/>
    <property type="project" value="TAIR"/>
</dbReference>
<dbReference type="GO" id="GO:0000976">
    <property type="term" value="F:transcription cis-regulatory region binding"/>
    <property type="evidence" value="ECO:0000353"/>
    <property type="project" value="TAIR"/>
</dbReference>
<dbReference type="GO" id="GO:0080060">
    <property type="term" value="P:integument development"/>
    <property type="evidence" value="ECO:0000315"/>
    <property type="project" value="UniProtKB"/>
</dbReference>
<dbReference type="GO" id="GO:0045995">
    <property type="term" value="P:regulation of embryonic development"/>
    <property type="evidence" value="ECO:0000315"/>
    <property type="project" value="UniProtKB"/>
</dbReference>
<dbReference type="GO" id="GO:0009753">
    <property type="term" value="P:response to jasmonic acid"/>
    <property type="evidence" value="ECO:0000270"/>
    <property type="project" value="UniProtKB"/>
</dbReference>
<dbReference type="GO" id="GO:0048317">
    <property type="term" value="P:seed morphogenesis"/>
    <property type="evidence" value="ECO:0000315"/>
    <property type="project" value="UniProtKB"/>
</dbReference>
<dbReference type="FunFam" id="2.170.150.80:FF:000005">
    <property type="entry name" value="NAC transcription factor 56"/>
    <property type="match status" value="1"/>
</dbReference>
<dbReference type="Gene3D" id="2.170.150.80">
    <property type="entry name" value="NAC domain"/>
    <property type="match status" value="1"/>
</dbReference>
<dbReference type="InterPro" id="IPR003441">
    <property type="entry name" value="NAC-dom"/>
</dbReference>
<dbReference type="InterPro" id="IPR036093">
    <property type="entry name" value="NAC_dom_sf"/>
</dbReference>
<dbReference type="PANTHER" id="PTHR31719">
    <property type="entry name" value="NAC TRANSCRIPTION FACTOR 56"/>
    <property type="match status" value="1"/>
</dbReference>
<dbReference type="PANTHER" id="PTHR31719:SF241">
    <property type="entry name" value="NAC TRANSCRIPTION FACTOR 56"/>
    <property type="match status" value="1"/>
</dbReference>
<dbReference type="Pfam" id="PF02365">
    <property type="entry name" value="NAM"/>
    <property type="match status" value="1"/>
</dbReference>
<dbReference type="SUPFAM" id="SSF101941">
    <property type="entry name" value="NAC domain"/>
    <property type="match status" value="1"/>
</dbReference>
<dbReference type="PROSITE" id="PS51005">
    <property type="entry name" value="NAC"/>
    <property type="match status" value="1"/>
</dbReference>
<keyword id="KW-0238">DNA-binding</keyword>
<keyword id="KW-0539">Nucleus</keyword>
<keyword id="KW-1185">Reference proteome</keyword>
<keyword id="KW-0804">Transcription</keyword>
<keyword id="KW-0805">Transcription regulation</keyword>
<comment type="function">
    <text evidence="6 10">Transcription factor of the NAC family (Probable). Together with NAC018/NARS2, regulates embryogenesis by regulating the development and degeneration of ovule integuments, a process required for intertissue communication between the embryo and the maternal integument (PubMed:18849494).</text>
</comment>
<comment type="subcellular location">
    <subcellularLocation>
        <location evidence="6">Nucleus</location>
    </subcellularLocation>
</comment>
<comment type="tissue specificity">
    <text evidence="3 4 6">Stamen specific, in anthers from stage 8 (PubMed:15100403, PubMed:16055634). Expressed in the outer integument, but seems not expressed in the embryo at the torpedo stage (PubMed:18849494).</text>
</comment>
<comment type="developmental stage">
    <text evidence="4">Expressed throughout anthers from stages 8 to 12. Later confined to distal region of anthers from stage 13.</text>
</comment>
<comment type="induction">
    <text evidence="5">By Jasmonic acid (JA).</text>
</comment>
<comment type="domain">
    <text evidence="1">The NAC domain includes a DNA binding domain and a dimerization domain.</text>
</comment>
<comment type="disruption phenotype">
    <text evidence="6">When associated with disruption in NAC018/NARS2, abnormally shaped seeds, defect in embryogenesis sometimes arrested at the torpedo-shaped embryo stage thus leading to partial embryonic lethality, markedly delayed integuments degeneration, and delay of silique senescence.</text>
</comment>
<accession>Q9LD44</accession>
<reference key="1">
    <citation type="journal article" date="2001" name="Development">
        <title>The CUP-SHAPED COTYLEDON1 gene of Arabidopsis regulates shoot apical meristem formation.</title>
        <authorList>
            <person name="Takada S."/>
            <person name="Hibara K."/>
            <person name="Ishida T."/>
            <person name="Tasaka M."/>
        </authorList>
    </citation>
    <scope>NUCLEOTIDE SEQUENCE [MRNA]</scope>
    <source>
        <strain>cv. Columbia</strain>
    </source>
</reference>
<reference key="2">
    <citation type="journal article" date="2000" name="DNA Res.">
        <title>Structural analysis of Arabidopsis thaliana chromosome 3. I. Sequence features of the regions of 4,504,864 bp covered by sixty P1 and TAC clones.</title>
        <authorList>
            <person name="Sato S."/>
            <person name="Nakamura Y."/>
            <person name="Kaneko T."/>
            <person name="Katoh T."/>
            <person name="Asamizu E."/>
            <person name="Tabata S."/>
        </authorList>
    </citation>
    <scope>NUCLEOTIDE SEQUENCE [LARGE SCALE GENOMIC DNA]</scope>
    <source>
        <strain>cv. Columbia</strain>
    </source>
</reference>
<reference key="3">
    <citation type="journal article" date="2000" name="Nature">
        <title>Sequence and analysis of chromosome 3 of the plant Arabidopsis thaliana.</title>
        <authorList>
            <person name="Salanoubat M."/>
            <person name="Lemcke K."/>
            <person name="Rieger M."/>
            <person name="Ansorge W."/>
            <person name="Unseld M."/>
            <person name="Fartmann B."/>
            <person name="Valle G."/>
            <person name="Bloecker H."/>
            <person name="Perez-Alonso M."/>
            <person name="Obermaier B."/>
            <person name="Delseny M."/>
            <person name="Boutry M."/>
            <person name="Grivell L.A."/>
            <person name="Mache R."/>
            <person name="Puigdomenech P."/>
            <person name="De Simone V."/>
            <person name="Choisne N."/>
            <person name="Artiguenave F."/>
            <person name="Robert C."/>
            <person name="Brottier P."/>
            <person name="Wincker P."/>
            <person name="Cattolico L."/>
            <person name="Weissenbach J."/>
            <person name="Saurin W."/>
            <person name="Quetier F."/>
            <person name="Schaefer M."/>
            <person name="Mueller-Auer S."/>
            <person name="Gabel C."/>
            <person name="Fuchs M."/>
            <person name="Benes V."/>
            <person name="Wurmbach E."/>
            <person name="Drzonek H."/>
            <person name="Erfle H."/>
            <person name="Jordan N."/>
            <person name="Bangert S."/>
            <person name="Wiedelmann R."/>
            <person name="Kranz H."/>
            <person name="Voss H."/>
            <person name="Holland R."/>
            <person name="Brandt P."/>
            <person name="Nyakatura G."/>
            <person name="Vezzi A."/>
            <person name="D'Angelo M."/>
            <person name="Pallavicini A."/>
            <person name="Toppo S."/>
            <person name="Simionati B."/>
            <person name="Conrad A."/>
            <person name="Hornischer K."/>
            <person name="Kauer G."/>
            <person name="Loehnert T.-H."/>
            <person name="Nordsiek G."/>
            <person name="Reichelt J."/>
            <person name="Scharfe M."/>
            <person name="Schoen O."/>
            <person name="Bargues M."/>
            <person name="Terol J."/>
            <person name="Climent J."/>
            <person name="Navarro P."/>
            <person name="Collado C."/>
            <person name="Perez-Perez A."/>
            <person name="Ottenwaelder B."/>
            <person name="Duchemin D."/>
            <person name="Cooke R."/>
            <person name="Laudie M."/>
            <person name="Berger-Llauro C."/>
            <person name="Purnelle B."/>
            <person name="Masuy D."/>
            <person name="de Haan M."/>
            <person name="Maarse A.C."/>
            <person name="Alcaraz J.-P."/>
            <person name="Cottet A."/>
            <person name="Casacuberta E."/>
            <person name="Monfort A."/>
            <person name="Argiriou A."/>
            <person name="Flores M."/>
            <person name="Liguori R."/>
            <person name="Vitale D."/>
            <person name="Mannhaupt G."/>
            <person name="Haase D."/>
            <person name="Schoof H."/>
            <person name="Rudd S."/>
            <person name="Zaccaria P."/>
            <person name="Mewes H.-W."/>
            <person name="Mayer K.F.X."/>
            <person name="Kaul S."/>
            <person name="Town C.D."/>
            <person name="Koo H.L."/>
            <person name="Tallon L.J."/>
            <person name="Jenkins J."/>
            <person name="Rooney T."/>
            <person name="Rizzo M."/>
            <person name="Walts A."/>
            <person name="Utterback T."/>
            <person name="Fujii C.Y."/>
            <person name="Shea T.P."/>
            <person name="Creasy T.H."/>
            <person name="Haas B."/>
            <person name="Maiti R."/>
            <person name="Wu D."/>
            <person name="Peterson J."/>
            <person name="Van Aken S."/>
            <person name="Pai G."/>
            <person name="Militscher J."/>
            <person name="Sellers P."/>
            <person name="Gill J.E."/>
            <person name="Feldblyum T.V."/>
            <person name="Preuss D."/>
            <person name="Lin X."/>
            <person name="Nierman W.C."/>
            <person name="Salzberg S.L."/>
            <person name="White O."/>
            <person name="Venter J.C."/>
            <person name="Fraser C.M."/>
            <person name="Kaneko T."/>
            <person name="Nakamura Y."/>
            <person name="Sato S."/>
            <person name="Kato T."/>
            <person name="Asamizu E."/>
            <person name="Sasamoto S."/>
            <person name="Kimura T."/>
            <person name="Idesawa K."/>
            <person name="Kawashima K."/>
            <person name="Kishida Y."/>
            <person name="Kiyokawa C."/>
            <person name="Kohara M."/>
            <person name="Matsumoto M."/>
            <person name="Matsuno A."/>
            <person name="Muraki A."/>
            <person name="Nakayama S."/>
            <person name="Nakazaki N."/>
            <person name="Shinpo S."/>
            <person name="Takeuchi C."/>
            <person name="Wada T."/>
            <person name="Watanabe A."/>
            <person name="Yamada M."/>
            <person name="Yasuda M."/>
            <person name="Tabata S."/>
        </authorList>
    </citation>
    <scope>NUCLEOTIDE SEQUENCE [LARGE SCALE GENOMIC DNA]</scope>
    <source>
        <strain>cv. Columbia</strain>
    </source>
</reference>
<reference key="4">
    <citation type="journal article" date="2017" name="Plant J.">
        <title>Araport11: a complete reannotation of the Arabidopsis thaliana reference genome.</title>
        <authorList>
            <person name="Cheng C.Y."/>
            <person name="Krishnakumar V."/>
            <person name="Chan A.P."/>
            <person name="Thibaud-Nissen F."/>
            <person name="Schobel S."/>
            <person name="Town C.D."/>
        </authorList>
    </citation>
    <scope>GENOME REANNOTATION</scope>
    <source>
        <strain>cv. Columbia</strain>
    </source>
</reference>
<reference key="5">
    <citation type="journal article" date="2003" name="Science">
        <title>Empirical analysis of transcriptional activity in the Arabidopsis genome.</title>
        <authorList>
            <person name="Yamada K."/>
            <person name="Lim J."/>
            <person name="Dale J.M."/>
            <person name="Chen H."/>
            <person name="Shinn P."/>
            <person name="Palm C.J."/>
            <person name="Southwick A.M."/>
            <person name="Wu H.C."/>
            <person name="Kim C.J."/>
            <person name="Nguyen M."/>
            <person name="Pham P.K."/>
            <person name="Cheuk R.F."/>
            <person name="Karlin-Newmann G."/>
            <person name="Liu S.X."/>
            <person name="Lam B."/>
            <person name="Sakano H."/>
            <person name="Wu T."/>
            <person name="Yu G."/>
            <person name="Miranda M."/>
            <person name="Quach H.L."/>
            <person name="Tripp M."/>
            <person name="Chang C.H."/>
            <person name="Lee J.M."/>
            <person name="Toriumi M.J."/>
            <person name="Chan M.M."/>
            <person name="Tang C.C."/>
            <person name="Onodera C.S."/>
            <person name="Deng J.M."/>
            <person name="Akiyama K."/>
            <person name="Ansari Y."/>
            <person name="Arakawa T."/>
            <person name="Banh J."/>
            <person name="Banno F."/>
            <person name="Bowser L."/>
            <person name="Brooks S.Y."/>
            <person name="Carninci P."/>
            <person name="Chao Q."/>
            <person name="Choy N."/>
            <person name="Enju A."/>
            <person name="Goldsmith A.D."/>
            <person name="Gurjal M."/>
            <person name="Hansen N.F."/>
            <person name="Hayashizaki Y."/>
            <person name="Johnson-Hopson C."/>
            <person name="Hsuan V.W."/>
            <person name="Iida K."/>
            <person name="Karnes M."/>
            <person name="Khan S."/>
            <person name="Koesema E."/>
            <person name="Ishida J."/>
            <person name="Jiang P.X."/>
            <person name="Jones T."/>
            <person name="Kawai J."/>
            <person name="Kamiya A."/>
            <person name="Meyers C."/>
            <person name="Nakajima M."/>
            <person name="Narusaka M."/>
            <person name="Seki M."/>
            <person name="Sakurai T."/>
            <person name="Satou M."/>
            <person name="Tamse R."/>
            <person name="Vaysberg M."/>
            <person name="Wallender E.K."/>
            <person name="Wong C."/>
            <person name="Yamamura Y."/>
            <person name="Yuan S."/>
            <person name="Shinozaki K."/>
            <person name="Davis R.W."/>
            <person name="Theologis A."/>
            <person name="Ecker J.R."/>
        </authorList>
    </citation>
    <scope>NUCLEOTIDE SEQUENCE [LARGE SCALE MRNA]</scope>
    <source>
        <strain>cv. Columbia</strain>
    </source>
</reference>
<reference key="6">
    <citation type="journal article" date="2003" name="DNA Res.">
        <title>Comprehensive analysis of NAC family genes in Oryza sativa and Arabidopsis thaliana.</title>
        <authorList>
            <person name="Ooka H."/>
            <person name="Satoh K."/>
            <person name="Doi K."/>
            <person name="Nagata T."/>
            <person name="Otomo Y."/>
            <person name="Murakami K."/>
            <person name="Matsubara K."/>
            <person name="Osato N."/>
            <person name="Kawai J."/>
            <person name="Carninci P."/>
            <person name="Hayashizaki Y."/>
            <person name="Suzuki K."/>
            <person name="Kojima K."/>
            <person name="Takahara Y."/>
            <person name="Yamamoto K."/>
            <person name="Kikuchi S."/>
        </authorList>
    </citation>
    <scope>GENE FAMILY</scope>
    <scope>NOMENCLATURE</scope>
</reference>
<reference key="7">
    <citation type="journal article" date="2004" name="Plant Cell">
        <title>Genome-wide analysis of spatial gene expression in Arabidopsis flowers.</title>
        <authorList>
            <person name="Wellmer F."/>
            <person name="Riechmann J.L."/>
            <person name="Alves-Ferreira M."/>
            <person name="Meyerowitz E.M."/>
        </authorList>
    </citation>
    <scope>TISSUE SPECIFICITY</scope>
</reference>
<reference key="8">
    <citation type="journal article" date="2005" name="Plant Cell">
        <title>Gene trap lines define domains of gene regulation in Arabidopsis petals and stamens.</title>
        <authorList>
            <person name="Nakayama N."/>
            <person name="Arroyo J.M."/>
            <person name="Simorowski J."/>
            <person name="May B."/>
            <person name="Martienssen R."/>
            <person name="Irish V.F."/>
        </authorList>
    </citation>
    <scope>TISSUE SPECIFICITY</scope>
    <scope>DEVELOPMENTAL STAGE</scope>
</reference>
<reference key="9">
    <citation type="journal article" date="2006" name="Plant J.">
        <title>Transcriptional regulators of stamen development in Arabidopsis identified by transcriptional profiling.</title>
        <authorList>
            <person name="Mandaokar A."/>
            <person name="Thines B."/>
            <person name="Shin B."/>
            <person name="Lange B.M."/>
            <person name="Choi G."/>
            <person name="Koo Y.J."/>
            <person name="Yoo Y.J."/>
            <person name="Choi Y.D."/>
            <person name="Choi G."/>
            <person name="Browse J."/>
        </authorList>
    </citation>
    <scope>INDUCTION BY JASMONIC ACID</scope>
    <scope>GENE FAMILY</scope>
</reference>
<reference key="10">
    <citation type="journal article" date="2008" name="Plant Cell">
        <title>NAC family proteins NARS1/NAC2 and NARS2/NAM in the outer integument regulate embryogenesis in Arabidopsis.</title>
        <authorList>
            <person name="Kunieda T."/>
            <person name="Mitsuda N."/>
            <person name="Ohme-Takagi M."/>
            <person name="Takeda S."/>
            <person name="Aida M."/>
            <person name="Tasaka M."/>
            <person name="Kondo M."/>
            <person name="Nishimura M."/>
            <person name="Hara-Nishimura I."/>
        </authorList>
    </citation>
    <scope>FUNCTION</scope>
    <scope>DISRUPTION PHENOTYPE</scope>
    <scope>SUBCELLULAR LOCATION</scope>
    <scope>TISSUE SPECIFICITY</scope>
    <source>
        <strain>cv. Columbia</strain>
    </source>
</reference>
<evidence type="ECO:0000255" key="1">
    <source>
        <dbReference type="PROSITE-ProRule" id="PRU00353"/>
    </source>
</evidence>
<evidence type="ECO:0000256" key="2">
    <source>
        <dbReference type="SAM" id="MobiDB-lite"/>
    </source>
</evidence>
<evidence type="ECO:0000269" key="3">
    <source>
    </source>
</evidence>
<evidence type="ECO:0000269" key="4">
    <source>
    </source>
</evidence>
<evidence type="ECO:0000269" key="5">
    <source>
    </source>
</evidence>
<evidence type="ECO:0000269" key="6">
    <source>
    </source>
</evidence>
<evidence type="ECO:0000303" key="7">
    <source>
    </source>
</evidence>
<evidence type="ECO:0000303" key="8">
    <source>
    </source>
</evidence>
<evidence type="ECO:0000303" key="9">
    <source>
    </source>
</evidence>
<evidence type="ECO:0000305" key="10"/>
<evidence type="ECO:0000312" key="11">
    <source>
        <dbReference type="Araport" id="AT3G15510"/>
    </source>
</evidence>
<evidence type="ECO:0000312" key="12">
    <source>
        <dbReference type="EMBL" id="AAF35417.1"/>
    </source>
</evidence>
<protein>
    <recommendedName>
        <fullName evidence="8">NAC transcription factor 56</fullName>
        <shortName evidence="8">AtNAC056</shortName>
    </recommendedName>
    <alternativeName>
        <fullName evidence="7">NAC domain-containing protein 2</fullName>
        <shortName evidence="7">AtNAC2</shortName>
    </alternativeName>
    <alternativeName>
        <fullName evidence="9">Protein NAC-REGULATED SEED MORPHOLOGY 1</fullName>
    </alternativeName>
</protein>
<gene>
    <name evidence="8" type="primary">NAC056</name>
    <name evidence="8" type="synonym">ANAC056</name>
    <name evidence="7" type="synonym">NAC2</name>
    <name evidence="9" type="synonym">NARS1</name>
    <name evidence="11" type="ordered locus">At3g15510</name>
    <name evidence="12" type="ORF">MJK13.17</name>
</gene>
<proteinExistence type="evidence at transcript level"/>
<sequence length="364" mass="40027">MESTDSSGGPPPPQPNLPPGFRFHPTDEELVVHYLKRKAASAPLPVAIIAEVDLYKFDPWELPAKASFGEQEWYFFSPRDRKYPNGARPNRAATSGYWKATGTDKPVLASDGNQKVGVKKALVFYSGKPPKGVKSDWIMHEYRLIENKPNNRPPGCDFGNKKNSLRLDDWVLCRIYKKNNASRHVDNDKDHDMIDYIFRKIPPSLSMAAASTGLHQHHHNVSRSMNFFPGKFSGGGYGIFSDGGNTSIYDGGGMINNIGTDSVDHDNNADVVGLNHASSSGPMMMANLKRTLPVPYWPVADEEQDASPSKRFHGVGGGGGDCSNMSSSMMEETPPLMQQQGGVLGDGLFRTTSYQLPGLNWYSS</sequence>